<accession>Q5F478</accession>
<evidence type="ECO:0000250" key="1"/>
<comment type="function">
    <text evidence="1">Putative regulatory subunit of protein phosphatase 6 (PP6) that may be involved in the recognition of phosphoprotein substrates.</text>
</comment>
<comment type="subunit">
    <text evidence="1">Protein phosphatase 6 (PP6) holoenzyme is proposed to be a heterotrimeric complex formed by the catalytic subunit, a SAPS domain-containing subunit (PP6R) and an ankyrin repeat-domain containing regulatory subunit (ARS).</text>
</comment>
<proteinExistence type="evidence at transcript level"/>
<dbReference type="EMBL" id="AJ851422">
    <property type="protein sequence ID" value="CAH65056.1"/>
    <property type="molecule type" value="mRNA"/>
</dbReference>
<dbReference type="RefSeq" id="NP_001012933.1">
    <property type="nucleotide sequence ID" value="NM_001012915.1"/>
</dbReference>
<dbReference type="SMR" id="Q5F478"/>
<dbReference type="FunCoup" id="Q5F478">
    <property type="interactions" value="54"/>
</dbReference>
<dbReference type="STRING" id="9031.ENSGALP00000012967"/>
<dbReference type="PaxDb" id="9031-ENSGALP00000012967"/>
<dbReference type="GeneID" id="424055"/>
<dbReference type="KEGG" id="gga:424055"/>
<dbReference type="CTD" id="91526"/>
<dbReference type="VEuPathDB" id="HostDB:geneid_424055"/>
<dbReference type="eggNOG" id="KOG0504">
    <property type="taxonomic scope" value="Eukaryota"/>
</dbReference>
<dbReference type="eggNOG" id="KOG4177">
    <property type="taxonomic scope" value="Eukaryota"/>
</dbReference>
<dbReference type="HOGENOM" id="CLU_000134_58_0_1"/>
<dbReference type="InParanoid" id="Q5F478"/>
<dbReference type="OrthoDB" id="7464126at2759"/>
<dbReference type="PhylomeDB" id="Q5F478"/>
<dbReference type="PRO" id="PR:Q5F478"/>
<dbReference type="Proteomes" id="UP000000539">
    <property type="component" value="Chromosome 7"/>
</dbReference>
<dbReference type="Bgee" id="ENSGALG00000007996">
    <property type="expression patterns" value="Expressed in spleen and 14 other cell types or tissues"/>
</dbReference>
<dbReference type="Gene3D" id="1.25.40.20">
    <property type="entry name" value="Ankyrin repeat-containing domain"/>
    <property type="match status" value="12"/>
</dbReference>
<dbReference type="InterPro" id="IPR002110">
    <property type="entry name" value="Ankyrin_rpt"/>
</dbReference>
<dbReference type="InterPro" id="IPR036770">
    <property type="entry name" value="Ankyrin_rpt-contain_sf"/>
</dbReference>
<dbReference type="PANTHER" id="PTHR24198">
    <property type="entry name" value="ANKYRIN REPEAT AND PROTEIN KINASE DOMAIN-CONTAINING PROTEIN"/>
    <property type="match status" value="1"/>
</dbReference>
<dbReference type="PANTHER" id="PTHR24198:SF192">
    <property type="entry name" value="SERINE_THREONINE-PROTEIN PHOSPHATASE 6 REGULATORY ANKYRIN REPEAT SUBUNIT A"/>
    <property type="match status" value="1"/>
</dbReference>
<dbReference type="Pfam" id="PF00023">
    <property type="entry name" value="Ank"/>
    <property type="match status" value="4"/>
</dbReference>
<dbReference type="Pfam" id="PF12796">
    <property type="entry name" value="Ank_2"/>
    <property type="match status" value="8"/>
</dbReference>
<dbReference type="Pfam" id="PF13637">
    <property type="entry name" value="Ank_4"/>
    <property type="match status" value="2"/>
</dbReference>
<dbReference type="PRINTS" id="PR01415">
    <property type="entry name" value="ANKYRIN"/>
</dbReference>
<dbReference type="SMART" id="SM00248">
    <property type="entry name" value="ANK"/>
    <property type="match status" value="28"/>
</dbReference>
<dbReference type="SUPFAM" id="SSF48403">
    <property type="entry name" value="Ankyrin repeat"/>
    <property type="match status" value="4"/>
</dbReference>
<dbReference type="PROSITE" id="PS50297">
    <property type="entry name" value="ANK_REP_REGION"/>
    <property type="match status" value="1"/>
</dbReference>
<dbReference type="PROSITE" id="PS50088">
    <property type="entry name" value="ANK_REPEAT"/>
    <property type="match status" value="23"/>
</dbReference>
<gene>
    <name type="primary">ANKRD44</name>
    <name type="ORF">RCJMB04_2g14</name>
</gene>
<feature type="chain" id="PRO_0000244573" description="Serine/threonine-protein phosphatase 6 regulatory ankyrin repeat subunit B">
    <location>
        <begin position="1"/>
        <end position="990"/>
    </location>
</feature>
<feature type="repeat" description="ANK 1">
    <location>
        <begin position="7"/>
        <end position="36"/>
    </location>
</feature>
<feature type="repeat" description="ANK 2">
    <location>
        <begin position="40"/>
        <end position="69"/>
    </location>
</feature>
<feature type="repeat" description="ANK 3">
    <location>
        <begin position="73"/>
        <end position="102"/>
    </location>
</feature>
<feature type="repeat" description="ANK 4">
    <location>
        <begin position="106"/>
        <end position="135"/>
    </location>
</feature>
<feature type="repeat" description="ANK 5">
    <location>
        <begin position="139"/>
        <end position="168"/>
    </location>
</feature>
<feature type="repeat" description="ANK 6">
    <location>
        <begin position="172"/>
        <end position="201"/>
    </location>
</feature>
<feature type="repeat" description="ANK 7">
    <location>
        <begin position="205"/>
        <end position="234"/>
    </location>
</feature>
<feature type="repeat" description="ANK 8">
    <location>
        <begin position="238"/>
        <end position="267"/>
    </location>
</feature>
<feature type="repeat" description="ANK 9">
    <location>
        <begin position="271"/>
        <end position="301"/>
    </location>
</feature>
<feature type="repeat" description="ANK 10">
    <location>
        <begin position="305"/>
        <end position="334"/>
    </location>
</feature>
<feature type="repeat" description="ANK 11">
    <location>
        <begin position="338"/>
        <end position="367"/>
    </location>
</feature>
<feature type="repeat" description="ANK 12">
    <location>
        <begin position="371"/>
        <end position="400"/>
    </location>
</feature>
<feature type="repeat" description="ANK 13">
    <location>
        <begin position="404"/>
        <end position="433"/>
    </location>
</feature>
<feature type="repeat" description="ANK 14">
    <location>
        <begin position="437"/>
        <end position="466"/>
    </location>
</feature>
<feature type="repeat" description="ANK 15">
    <location>
        <begin position="470"/>
        <end position="499"/>
    </location>
</feature>
<feature type="repeat" description="ANK 16">
    <location>
        <begin position="531"/>
        <end position="560"/>
    </location>
</feature>
<feature type="repeat" description="ANK 17">
    <location>
        <begin position="566"/>
        <end position="595"/>
    </location>
</feature>
<feature type="repeat" description="ANK 18">
    <location>
        <begin position="599"/>
        <end position="628"/>
    </location>
</feature>
<feature type="repeat" description="ANK 19">
    <location>
        <begin position="633"/>
        <end position="662"/>
    </location>
</feature>
<feature type="repeat" description="ANK 20">
    <location>
        <begin position="666"/>
        <end position="695"/>
    </location>
</feature>
<feature type="repeat" description="ANK 21">
    <location>
        <begin position="699"/>
        <end position="728"/>
    </location>
</feature>
<feature type="repeat" description="ANK 22">
    <location>
        <begin position="732"/>
        <end position="761"/>
    </location>
</feature>
<feature type="repeat" description="ANK 23">
    <location>
        <begin position="768"/>
        <end position="797"/>
    </location>
</feature>
<feature type="repeat" description="ANK 24">
    <location>
        <begin position="800"/>
        <end position="829"/>
    </location>
</feature>
<feature type="repeat" description="ANK 25">
    <location>
        <begin position="835"/>
        <end position="864"/>
    </location>
</feature>
<feature type="repeat" description="ANK 26">
    <location>
        <begin position="868"/>
        <end position="898"/>
    </location>
</feature>
<feature type="repeat" description="ANK 27">
    <location>
        <begin position="902"/>
        <end position="931"/>
    </location>
</feature>
<feature type="repeat" description="ANK 28">
    <location>
        <begin position="938"/>
        <end position="967"/>
    </location>
</feature>
<name>ANR44_CHICK</name>
<sequence>MAVLKLADQPPLVQAIFSGDPEEIRMLIYKTEDVNALDAEKRTPLHVASFLGDADIIELLILSGARVNAKDNMWLTPLHRAVASRSEEAVQVLIKHSADVNARDKNWQTPLHVAAANKALKCAEIIIPMLSSVNVSDRGGRTALHHAALNGHVEMVNLLLAKGANINAFDKKDRRALHWAAYMGHLEVVALLINHGAEVTCKDKKGYTPLHAAASNGQINIVKHLLNLGVEIDEMNIYGNTALHIACYNGQDSVVNELIDYGANVNQPNNNGFTPLHFAAASTHGALCLELLVNNGADVNIQSKDGKSPLHMTAVHGRFTRSQTLIQNGGEIDCVDKDGNTPLHVAARYGHELLINTLITSGADTAKCGIHNMFPLHLAALNAHSDCCRKLLSSGFEIDTPDSFGRTCLHAAAAGGNVECIKLLQSSGADFNKKDKRGRTPLHYAAANCHFHCIETLVTTGANINETDDWGRTPLHYAAASDMDRKKNILGNSHENAEELERTSEMKEKEAALCLEFLLQNDANPSIQDKEGYNTVHYAAAYGHRQCLELLLEKNSNMFEESDSSATKSPLHLAAYNGHHQALEVLLQSLVDLDIKDEKGRTALDLAAFKGHAECVEALISQGASVTVKDNVTKRTPLHASVINGHTPCLRLLLEVADNPDVTDAKGQTPLMLAVAYGHIDAVSLLLEKEASVDAADLLGCTALHRGIMTGHEECVQMLLEKEVSILCKDARGRTPLHFAAARGHATWLSELLQIALSEEDCSLKDNQGYTPLHWACYNGHENCIEVLLEQKFFRKFYGNSFSPLHCAVINDHENCASMLIGAIDASIVNCKDDKGRTPLHAAAFADHVECLQLLLSHSAQVNAVDHAGKTALMMAAQNGHVGAVDFLVNIAKADLTLRDKDSNTSLHLASSKGHEKCALLILDKIQEQSLINAKNNSLQTPLHIAARNGLKMVVEELLAKGACVLAVDENVSRSNGPRTSSATDVQKEE</sequence>
<organism>
    <name type="scientific">Gallus gallus</name>
    <name type="common">Chicken</name>
    <dbReference type="NCBI Taxonomy" id="9031"/>
    <lineage>
        <taxon>Eukaryota</taxon>
        <taxon>Metazoa</taxon>
        <taxon>Chordata</taxon>
        <taxon>Craniata</taxon>
        <taxon>Vertebrata</taxon>
        <taxon>Euteleostomi</taxon>
        <taxon>Archelosauria</taxon>
        <taxon>Archosauria</taxon>
        <taxon>Dinosauria</taxon>
        <taxon>Saurischia</taxon>
        <taxon>Theropoda</taxon>
        <taxon>Coelurosauria</taxon>
        <taxon>Aves</taxon>
        <taxon>Neognathae</taxon>
        <taxon>Galloanserae</taxon>
        <taxon>Galliformes</taxon>
        <taxon>Phasianidae</taxon>
        <taxon>Phasianinae</taxon>
        <taxon>Gallus</taxon>
    </lineage>
</organism>
<protein>
    <recommendedName>
        <fullName>Serine/threonine-protein phosphatase 6 regulatory ankyrin repeat subunit B</fullName>
        <shortName>PP6-ARS-B</shortName>
        <shortName>Serine/threonine-protein phosphatase 6 regulatory subunit ARS-B</shortName>
    </recommendedName>
    <alternativeName>
        <fullName>Ankyrin repeat domain-containing protein 44</fullName>
    </alternativeName>
</protein>
<keyword id="KW-0040">ANK repeat</keyword>
<keyword id="KW-1185">Reference proteome</keyword>
<keyword id="KW-0677">Repeat</keyword>
<reference key="1">
    <citation type="journal article" date="2005" name="Genome Biol.">
        <title>Full-length cDNAs from chicken bursal lymphocytes to facilitate gene function analysis.</title>
        <authorList>
            <person name="Caldwell R.B."/>
            <person name="Kierzek A.M."/>
            <person name="Arakawa H."/>
            <person name="Bezzubov Y."/>
            <person name="Zaim J."/>
            <person name="Fiedler P."/>
            <person name="Kutter S."/>
            <person name="Blagodatski A."/>
            <person name="Kostovska D."/>
            <person name="Koter M."/>
            <person name="Plachy J."/>
            <person name="Carninci P."/>
            <person name="Hayashizaki Y."/>
            <person name="Buerstedde J.-M."/>
        </authorList>
    </citation>
    <scope>NUCLEOTIDE SEQUENCE [LARGE SCALE MRNA]</scope>
    <source>
        <strain>CB</strain>
        <tissue>Bursa of Fabricius</tissue>
    </source>
</reference>